<keyword id="KW-0067">ATP-binding</keyword>
<keyword id="KW-0170">Cobalt</keyword>
<keyword id="KW-0963">Cytoplasm</keyword>
<keyword id="KW-0460">Magnesium</keyword>
<keyword id="KW-0479">Metal-binding</keyword>
<keyword id="KW-0547">Nucleotide-binding</keyword>
<keyword id="KW-0554">One-carbon metabolism</keyword>
<keyword id="KW-0630">Potassium</keyword>
<keyword id="KW-1185">Reference proteome</keyword>
<keyword id="KW-0808">Transferase</keyword>
<gene>
    <name type="primary">SAM2</name>
    <name evidence="7" type="ORF">CEY00_Acc08469</name>
</gene>
<dbReference type="EC" id="2.5.1.6" evidence="5"/>
<dbReference type="EMBL" id="U17239">
    <property type="protein sequence ID" value="AAA81377.1"/>
    <property type="molecule type" value="mRNA"/>
</dbReference>
<dbReference type="EMBL" id="NKQK01000008">
    <property type="protein sequence ID" value="PSS23645.1"/>
    <property type="molecule type" value="Genomic_DNA"/>
</dbReference>
<dbReference type="SMR" id="P50302"/>
<dbReference type="FunCoup" id="P50302">
    <property type="interactions" value="3395"/>
</dbReference>
<dbReference type="STRING" id="1590841.P50302"/>
<dbReference type="EnsemblPlants" id="PSS23645">
    <property type="protein sequence ID" value="PSS23645"/>
    <property type="gene ID" value="CEY00_Acc08469"/>
</dbReference>
<dbReference type="Gramene" id="PSS23645">
    <property type="protein sequence ID" value="PSS23645"/>
    <property type="gene ID" value="CEY00_Acc08469"/>
</dbReference>
<dbReference type="InParanoid" id="P50302"/>
<dbReference type="OMA" id="NMDTFLF"/>
<dbReference type="OrthoDB" id="5852090at2759"/>
<dbReference type="UniPathway" id="UPA00315">
    <property type="reaction ID" value="UER00080"/>
</dbReference>
<dbReference type="Proteomes" id="UP000241394">
    <property type="component" value="Chromosome LG8"/>
</dbReference>
<dbReference type="GO" id="GO:0005737">
    <property type="term" value="C:cytoplasm"/>
    <property type="evidence" value="ECO:0007669"/>
    <property type="project" value="UniProtKB-SubCell"/>
</dbReference>
<dbReference type="GO" id="GO:0005524">
    <property type="term" value="F:ATP binding"/>
    <property type="evidence" value="ECO:0007669"/>
    <property type="project" value="UniProtKB-KW"/>
</dbReference>
<dbReference type="GO" id="GO:0046872">
    <property type="term" value="F:metal ion binding"/>
    <property type="evidence" value="ECO:0007669"/>
    <property type="project" value="UniProtKB-KW"/>
</dbReference>
<dbReference type="GO" id="GO:0004478">
    <property type="term" value="F:methionine adenosyltransferase activity"/>
    <property type="evidence" value="ECO:0007669"/>
    <property type="project" value="UniProtKB-EC"/>
</dbReference>
<dbReference type="GO" id="GO:0006730">
    <property type="term" value="P:one-carbon metabolic process"/>
    <property type="evidence" value="ECO:0007669"/>
    <property type="project" value="UniProtKB-KW"/>
</dbReference>
<dbReference type="GO" id="GO:0006556">
    <property type="term" value="P:S-adenosylmethionine biosynthetic process"/>
    <property type="evidence" value="ECO:0007669"/>
    <property type="project" value="UniProtKB-UniPathway"/>
</dbReference>
<dbReference type="CDD" id="cd18079">
    <property type="entry name" value="S-AdoMet_synt"/>
    <property type="match status" value="1"/>
</dbReference>
<dbReference type="FunFam" id="3.30.300.10:FF:000001">
    <property type="entry name" value="S-adenosylmethionine synthase"/>
    <property type="match status" value="1"/>
</dbReference>
<dbReference type="FunFam" id="3.30.300.10:FF:000003">
    <property type="entry name" value="S-adenosylmethionine synthase"/>
    <property type="match status" value="1"/>
</dbReference>
<dbReference type="FunFam" id="3.30.300.10:FF:000004">
    <property type="entry name" value="S-adenosylmethionine synthase"/>
    <property type="match status" value="1"/>
</dbReference>
<dbReference type="Gene3D" id="3.30.300.10">
    <property type="match status" value="3"/>
</dbReference>
<dbReference type="HAMAP" id="MF_00086">
    <property type="entry name" value="S_AdoMet_synth1"/>
    <property type="match status" value="1"/>
</dbReference>
<dbReference type="InterPro" id="IPR022631">
    <property type="entry name" value="ADOMET_SYNTHASE_CS"/>
</dbReference>
<dbReference type="InterPro" id="IPR022630">
    <property type="entry name" value="S-AdoMet_synt_C"/>
</dbReference>
<dbReference type="InterPro" id="IPR022629">
    <property type="entry name" value="S-AdoMet_synt_central"/>
</dbReference>
<dbReference type="InterPro" id="IPR022628">
    <property type="entry name" value="S-AdoMet_synt_N"/>
</dbReference>
<dbReference type="InterPro" id="IPR002133">
    <property type="entry name" value="S-AdoMet_synthetase"/>
</dbReference>
<dbReference type="InterPro" id="IPR022636">
    <property type="entry name" value="S-AdoMet_synthetase_sfam"/>
</dbReference>
<dbReference type="NCBIfam" id="TIGR01034">
    <property type="entry name" value="metK"/>
    <property type="match status" value="1"/>
</dbReference>
<dbReference type="PANTHER" id="PTHR11964">
    <property type="entry name" value="S-ADENOSYLMETHIONINE SYNTHETASE"/>
    <property type="match status" value="1"/>
</dbReference>
<dbReference type="Pfam" id="PF02773">
    <property type="entry name" value="S-AdoMet_synt_C"/>
    <property type="match status" value="1"/>
</dbReference>
<dbReference type="Pfam" id="PF02772">
    <property type="entry name" value="S-AdoMet_synt_M"/>
    <property type="match status" value="1"/>
</dbReference>
<dbReference type="Pfam" id="PF00438">
    <property type="entry name" value="S-AdoMet_synt_N"/>
    <property type="match status" value="1"/>
</dbReference>
<dbReference type="PIRSF" id="PIRSF000497">
    <property type="entry name" value="MAT"/>
    <property type="match status" value="1"/>
</dbReference>
<dbReference type="SUPFAM" id="SSF55973">
    <property type="entry name" value="S-adenosylmethionine synthetase"/>
    <property type="match status" value="3"/>
</dbReference>
<dbReference type="PROSITE" id="PS00376">
    <property type="entry name" value="ADOMET_SYNTHASE_1"/>
    <property type="match status" value="1"/>
</dbReference>
<dbReference type="PROSITE" id="PS00377">
    <property type="entry name" value="ADOMET_SYNTHASE_2"/>
    <property type="match status" value="1"/>
</dbReference>
<accession>P50302</accession>
<accession>A0A2R6R7V5</accession>
<sequence>MESFLFTSESVNEGHPDKLCDQVSDAILDACLEQDPESKVACETCTKTNMVMVFGEITTKATVNYEKIVRDTCRGIGFTSPDVGLDADHCKVLVNIEQQSPDIAQGVHGHLSKKPEEIGAGDQGHMFGYATDETPELMPLTHVLATKLGAKLTEVRKNNTCPWLRPDGKTQVTVEYRNEGGAMVPVRVHTVLISTQHDETVTNEQIAKDLKEHVIKPVIPAQYMDDDTIFHLNPSGRFVIGGPHGDAGLTGRKIIIDTYGGWGAHGGGAFSGKDPTKVDRSGAYVVRQAAKSVVASGLARRCIVQVSYAIGVPEPLSVFVDTYKTGKIPDKDILALIKKNFDFRPGMIAINLDLKRGGNFRYQKTAAYGHFGRDDADFTWETVKILKPKA</sequence>
<evidence type="ECO:0000250" key="1"/>
<evidence type="ECO:0000250" key="2">
    <source>
        <dbReference type="UniProtKB" id="P0A817"/>
    </source>
</evidence>
<evidence type="ECO:0000250" key="3">
    <source>
        <dbReference type="UniProtKB" id="P13444"/>
    </source>
</evidence>
<evidence type="ECO:0000250" key="4">
    <source>
        <dbReference type="UniProtKB" id="Q00266"/>
    </source>
</evidence>
<evidence type="ECO:0000250" key="5">
    <source>
        <dbReference type="UniProtKB" id="Q96551"/>
    </source>
</evidence>
<evidence type="ECO:0000305" key="6"/>
<evidence type="ECO:0000312" key="7">
    <source>
        <dbReference type="EMBL" id="PSS23645.1"/>
    </source>
</evidence>
<comment type="function">
    <text evidence="5">Catalyzes the formation of S-adenosylmethionine from methionine and ATP. The reaction comprises two steps that are both catalyzed by the same enzyme: formation of S-adenosylmethionine (AdoMet) and triphosphate, and subsequent hydrolysis of the triphosphate.</text>
</comment>
<comment type="catalytic activity">
    <reaction evidence="5">
        <text>L-methionine + ATP + H2O = S-adenosyl-L-methionine + phosphate + diphosphate</text>
        <dbReference type="Rhea" id="RHEA:21080"/>
        <dbReference type="ChEBI" id="CHEBI:15377"/>
        <dbReference type="ChEBI" id="CHEBI:30616"/>
        <dbReference type="ChEBI" id="CHEBI:33019"/>
        <dbReference type="ChEBI" id="CHEBI:43474"/>
        <dbReference type="ChEBI" id="CHEBI:57844"/>
        <dbReference type="ChEBI" id="CHEBI:59789"/>
        <dbReference type="EC" id="2.5.1.6"/>
    </reaction>
</comment>
<comment type="cofactor">
    <cofactor evidence="5">
        <name>Mn(2+)</name>
        <dbReference type="ChEBI" id="CHEBI:29035"/>
    </cofactor>
    <cofactor evidence="5">
        <name>Mg(2+)</name>
        <dbReference type="ChEBI" id="CHEBI:18420"/>
    </cofactor>
    <cofactor evidence="5">
        <name>Co(2+)</name>
        <dbReference type="ChEBI" id="CHEBI:48828"/>
    </cofactor>
    <text evidence="3 5">Binds 2 divalent ions per subunit. The metal ions interact primarily with the substrate (By similarity). Can utilize magnesium, manganese or cobalt (in vitro) (By similarity).</text>
</comment>
<comment type="cofactor">
    <cofactor evidence="5">
        <name>K(+)</name>
        <dbReference type="ChEBI" id="CHEBI:29103"/>
    </cofactor>
    <text evidence="3">Binds 1 potassium ion per subunit. The potassium ion interacts primarily with the substrate (By similarity).</text>
</comment>
<comment type="pathway">
    <text evidence="5">Amino-acid biosynthesis; S-adenosyl-L-methionine biosynthesis; S-adenosyl-L-methionine from L-methionine: step 1/1.</text>
</comment>
<comment type="subunit">
    <text evidence="1">Homotetramer.</text>
</comment>
<comment type="subcellular location">
    <subcellularLocation>
        <location evidence="1">Cytoplasm</location>
    </subcellularLocation>
</comment>
<comment type="similarity">
    <text evidence="6">Belongs to the AdoMet synthase family.</text>
</comment>
<organism>
    <name type="scientific">Actinidia chinensis var. chinensis</name>
    <name type="common">Chinese soft-hair kiwi</name>
    <dbReference type="NCBI Taxonomy" id="1590841"/>
    <lineage>
        <taxon>Eukaryota</taxon>
        <taxon>Viridiplantae</taxon>
        <taxon>Streptophyta</taxon>
        <taxon>Embryophyta</taxon>
        <taxon>Tracheophyta</taxon>
        <taxon>Spermatophyta</taxon>
        <taxon>Magnoliopsida</taxon>
        <taxon>eudicotyledons</taxon>
        <taxon>Gunneridae</taxon>
        <taxon>Pentapetalae</taxon>
        <taxon>asterids</taxon>
        <taxon>Ericales</taxon>
        <taxon>Actinidiaceae</taxon>
        <taxon>Actinidia</taxon>
    </lineage>
</organism>
<protein>
    <recommendedName>
        <fullName>S-adenosylmethionine synthase 2</fullName>
        <shortName>AdoMet synthase 2</shortName>
        <ecNumber evidence="5">2.5.1.6</ecNumber>
    </recommendedName>
    <alternativeName>
        <fullName>Methionine adenosyltransferase 2</fullName>
        <shortName>MAT 2</shortName>
    </alternativeName>
</protein>
<name>METK2_ACTCC</name>
<feature type="chain" id="PRO_0000174454" description="S-adenosylmethionine synthase 2">
    <location>
        <begin position="1"/>
        <end position="390"/>
    </location>
</feature>
<feature type="binding site" evidence="3">
    <location>
        <position position="9"/>
    </location>
    <ligand>
        <name>Mg(2+)</name>
        <dbReference type="ChEBI" id="CHEBI:18420"/>
    </ligand>
</feature>
<feature type="binding site" description="in other chain" evidence="4">
    <location>
        <position position="15"/>
    </location>
    <ligand>
        <name>ATP</name>
        <dbReference type="ChEBI" id="CHEBI:30616"/>
        <note>ligand shared between two neighboring subunits</note>
    </ligand>
</feature>
<feature type="binding site" evidence="2">
    <location>
        <position position="43"/>
    </location>
    <ligand>
        <name>K(+)</name>
        <dbReference type="ChEBI" id="CHEBI:29103"/>
    </ligand>
</feature>
<feature type="binding site" description="in other chain" evidence="2">
    <location>
        <position position="56"/>
    </location>
    <ligand>
        <name>L-methionine</name>
        <dbReference type="ChEBI" id="CHEBI:57844"/>
        <note>ligand shared between two neighboring subunits</note>
    </ligand>
</feature>
<feature type="binding site" description="in other chain" evidence="2">
    <location>
        <position position="99"/>
    </location>
    <ligand>
        <name>L-methionine</name>
        <dbReference type="ChEBI" id="CHEBI:57844"/>
        <note>ligand shared between two neighboring subunits</note>
    </ligand>
</feature>
<feature type="binding site" description="in other chain" evidence="4">
    <location>
        <begin position="167"/>
        <end position="169"/>
    </location>
    <ligand>
        <name>ATP</name>
        <dbReference type="ChEBI" id="CHEBI:30616"/>
        <note>ligand shared between two neighboring subunits</note>
    </ligand>
</feature>
<feature type="binding site" description="in other chain" evidence="4">
    <location>
        <begin position="235"/>
        <end position="238"/>
    </location>
    <ligand>
        <name>ATP</name>
        <dbReference type="ChEBI" id="CHEBI:30616"/>
        <note>ligand shared between two neighboring subunits</note>
    </ligand>
</feature>
<feature type="binding site" description="in other chain" evidence="4">
    <location>
        <position position="246"/>
    </location>
    <ligand>
        <name>ATP</name>
        <dbReference type="ChEBI" id="CHEBI:30616"/>
        <note>ligand shared between two neighboring subunits</note>
    </ligand>
</feature>
<feature type="binding site" evidence="2">
    <location>
        <position position="246"/>
    </location>
    <ligand>
        <name>L-methionine</name>
        <dbReference type="ChEBI" id="CHEBI:57844"/>
        <note>ligand shared between two neighboring subunits</note>
    </ligand>
</feature>
<feature type="binding site" description="in other chain" evidence="2">
    <location>
        <begin position="252"/>
        <end position="253"/>
    </location>
    <ligand>
        <name>ATP</name>
        <dbReference type="ChEBI" id="CHEBI:30616"/>
        <note>ligand shared between two neighboring subunits</note>
    </ligand>
</feature>
<feature type="binding site" evidence="2">
    <location>
        <position position="269"/>
    </location>
    <ligand>
        <name>ATP</name>
        <dbReference type="ChEBI" id="CHEBI:30616"/>
        <note>ligand shared between two neighboring subunits</note>
    </ligand>
</feature>
<feature type="binding site" evidence="2">
    <location>
        <position position="273"/>
    </location>
    <ligand>
        <name>ATP</name>
        <dbReference type="ChEBI" id="CHEBI:30616"/>
        <note>ligand shared between two neighboring subunits</note>
    </ligand>
</feature>
<feature type="binding site" evidence="3">
    <location>
        <position position="277"/>
    </location>
    <ligand>
        <name>ATP</name>
        <dbReference type="ChEBI" id="CHEBI:30616"/>
        <note>ligand shared between two neighboring subunits</note>
    </ligand>
</feature>
<feature type="binding site" description="in other chain" evidence="2">
    <location>
        <position position="277"/>
    </location>
    <ligand>
        <name>L-methionine</name>
        <dbReference type="ChEBI" id="CHEBI:57844"/>
        <note>ligand shared between two neighboring subunits</note>
    </ligand>
</feature>
<feature type="sequence conflict" description="In Ref. 1; AAA81377." ref="1">
    <original>T</original>
    <variation>K</variation>
    <location>
        <position position="62"/>
    </location>
</feature>
<feature type="sequence conflict" description="In Ref. 1; AAA81377." ref="1">
    <original>K</original>
    <variation>E</variation>
    <location>
        <position position="339"/>
    </location>
</feature>
<feature type="sequence conflict" description="In Ref. 1; AAA81377." ref="1">
    <original>F</original>
    <variation>L</variation>
    <location>
        <position position="378"/>
    </location>
</feature>
<proteinExistence type="evidence at transcript level"/>
<reference key="1">
    <citation type="journal article" date="1995" name="Plant Physiol.">
        <title>Three cDNAs encoding S-adenosyl-L-methionine synthetase from Actinidia chinensis.</title>
        <authorList>
            <person name="Whittaker D.J."/>
            <person name="Smith G.S."/>
            <person name="Gardner R.C."/>
        </authorList>
    </citation>
    <scope>NUCLEOTIDE SEQUENCE [MRNA]</scope>
    <source>
        <tissue>Fruit</tissue>
    </source>
</reference>
<reference key="2">
    <citation type="journal article" date="2018" name="BMC Genomics">
        <title>A manually annotated Actinidia chinensis var. chinensis (kiwifruit) genome highlights the challenges associated with draft genomes and gene prediction in plants.</title>
        <authorList>
            <person name="Pilkington S.M."/>
            <person name="Crowhurst R."/>
            <person name="Hilario E."/>
            <person name="Nardozza S."/>
            <person name="Fraser L."/>
            <person name="Peng Y."/>
            <person name="Gunaseelan K."/>
            <person name="Simpson R."/>
            <person name="Tahir J."/>
            <person name="Deroles S.C."/>
            <person name="Templeton K."/>
            <person name="Luo Z."/>
            <person name="Davy M."/>
            <person name="Cheng C."/>
            <person name="McNeilage M."/>
            <person name="Scaglione D."/>
            <person name="Liu Y."/>
            <person name="Zhang Q."/>
            <person name="Datson P."/>
            <person name="De Silva N."/>
            <person name="Gardiner S.E."/>
            <person name="Bassett H."/>
            <person name="Chagne D."/>
            <person name="McCallum J."/>
            <person name="Dzierzon H."/>
            <person name="Deng C."/>
            <person name="Wang Y.Y."/>
            <person name="Barron L."/>
            <person name="Manako K."/>
            <person name="Bowen J."/>
            <person name="Foster T.M."/>
            <person name="Erridge Z.A."/>
            <person name="Tiffin H."/>
            <person name="Waite C.N."/>
            <person name="Davies K.M."/>
            <person name="Grierson E.P."/>
            <person name="Laing W.A."/>
            <person name="Kirk R."/>
            <person name="Chen X."/>
            <person name="Wood M."/>
            <person name="Montefiori M."/>
            <person name="Brummell D.A."/>
            <person name="Schwinn K.E."/>
            <person name="Catanach A."/>
            <person name="Fullerton C."/>
            <person name="Li D."/>
            <person name="Meiyalaghan S."/>
            <person name="Nieuwenhuizen N."/>
            <person name="Read N."/>
            <person name="Prakash R."/>
            <person name="Hunter D."/>
            <person name="Zhang H."/>
            <person name="McKenzie M."/>
            <person name="Knabel M."/>
            <person name="Harris A."/>
            <person name="Allan A.C."/>
            <person name="Gleave A."/>
            <person name="Chen A."/>
            <person name="Janssen B.J."/>
            <person name="Plunkett B."/>
            <person name="Ampomah-Dwamena C."/>
            <person name="Voogd C."/>
            <person name="Leif D."/>
            <person name="Lafferty D."/>
            <person name="Souleyre E.J.F."/>
            <person name="Varkonyi-Gasic E."/>
            <person name="Gambi F."/>
            <person name="Hanley J."/>
            <person name="Yao J.L."/>
            <person name="Cheung J."/>
            <person name="David K.M."/>
            <person name="Warren B."/>
            <person name="Marsh K."/>
            <person name="Snowden K.C."/>
            <person name="Lin-Wang K."/>
            <person name="Brian L."/>
            <person name="Martinez-Sanchez M."/>
            <person name="Wang M."/>
            <person name="Ileperuma N."/>
            <person name="Macnee N."/>
            <person name="Campin R."/>
            <person name="McAtee P."/>
            <person name="Drummond R.S.M."/>
            <person name="Espley R.V."/>
            <person name="Ireland H.S."/>
            <person name="Wu R."/>
            <person name="Atkinson R.G."/>
            <person name="Karunairetnam S."/>
            <person name="Bulley S."/>
            <person name="Chunkath S."/>
            <person name="Hanley Z."/>
            <person name="Storey R."/>
            <person name="Thrimawithana A.H."/>
            <person name="Thomson S."/>
            <person name="David C."/>
            <person name="Testolin R."/>
            <person name="Huang H."/>
            <person name="Hellens R.P."/>
            <person name="Schaffer R.J."/>
        </authorList>
    </citation>
    <scope>NUCLEOTIDE SEQUENCE [LARGE SCALE GENOMIC DNA]</scope>
    <source>
        <strain>cv. Red5</strain>
    </source>
</reference>